<keyword id="KW-1003">Cell membrane</keyword>
<keyword id="KW-0963">Cytoplasm</keyword>
<keyword id="KW-0342">GTP-binding</keyword>
<keyword id="KW-0472">Membrane</keyword>
<keyword id="KW-0547">Nucleotide-binding</keyword>
<keyword id="KW-1185">Reference proteome</keyword>
<keyword id="KW-0690">Ribosome biogenesis</keyword>
<keyword id="KW-0694">RNA-binding</keyword>
<keyword id="KW-0699">rRNA-binding</keyword>
<reference key="1">
    <citation type="journal article" date="2002" name="J. Bacteriol.">
        <title>Bex, the Bacillus subtilis homolog of the essential Escherichia coli GTPase Era, is required for normal cell division and spore formation.</title>
        <authorList>
            <person name="Minkovsky N."/>
            <person name="Zarimani A."/>
            <person name="Chary V.K."/>
            <person name="Johnstone B.H."/>
            <person name="Powell B.S."/>
            <person name="Torrance P.D."/>
            <person name="Court D.L."/>
            <person name="Simons R.W."/>
            <person name="Piggot P.J."/>
        </authorList>
    </citation>
    <scope>NUCLEOTIDE SEQUENCE [GENOMIC DNA]</scope>
    <scope>INDUCTION</scope>
    <scope>ABILITY TO COMPLEMENT E.COLI DISRUPTION MUTANT</scope>
    <scope>DISRUPTION PHENOTYPE</scope>
    <source>
        <strain>168</strain>
        <strain>168 / BR151</strain>
        <strain>IS75</strain>
    </source>
</reference>
<reference key="2">
    <citation type="journal article" date="1996" name="Microbiology">
        <title>Systematic sequencing of the 283 kb 210 degrees-232 degrees region of the Bacillus subtilis genome containing the skin element and many sporulation genes.</title>
        <authorList>
            <person name="Mizuno M."/>
            <person name="Masuda S."/>
            <person name="Takemaru K."/>
            <person name="Hosono S."/>
            <person name="Sato T."/>
            <person name="Takeuchi M."/>
            <person name="Kobayashi Y."/>
        </authorList>
    </citation>
    <scope>NUCLEOTIDE SEQUENCE [GENOMIC DNA]</scope>
    <source>
        <strain>168 / JH642</strain>
    </source>
</reference>
<reference key="3">
    <citation type="journal article" date="1997" name="Nature">
        <title>The complete genome sequence of the Gram-positive bacterium Bacillus subtilis.</title>
        <authorList>
            <person name="Kunst F."/>
            <person name="Ogasawara N."/>
            <person name="Moszer I."/>
            <person name="Albertini A.M."/>
            <person name="Alloni G."/>
            <person name="Azevedo V."/>
            <person name="Bertero M.G."/>
            <person name="Bessieres P."/>
            <person name="Bolotin A."/>
            <person name="Borchert S."/>
            <person name="Borriss R."/>
            <person name="Boursier L."/>
            <person name="Brans A."/>
            <person name="Braun M."/>
            <person name="Brignell S.C."/>
            <person name="Bron S."/>
            <person name="Brouillet S."/>
            <person name="Bruschi C.V."/>
            <person name="Caldwell B."/>
            <person name="Capuano V."/>
            <person name="Carter N.M."/>
            <person name="Choi S.-K."/>
            <person name="Codani J.-J."/>
            <person name="Connerton I.F."/>
            <person name="Cummings N.J."/>
            <person name="Daniel R.A."/>
            <person name="Denizot F."/>
            <person name="Devine K.M."/>
            <person name="Duesterhoeft A."/>
            <person name="Ehrlich S.D."/>
            <person name="Emmerson P.T."/>
            <person name="Entian K.-D."/>
            <person name="Errington J."/>
            <person name="Fabret C."/>
            <person name="Ferrari E."/>
            <person name="Foulger D."/>
            <person name="Fritz C."/>
            <person name="Fujita M."/>
            <person name="Fujita Y."/>
            <person name="Fuma S."/>
            <person name="Galizzi A."/>
            <person name="Galleron N."/>
            <person name="Ghim S.-Y."/>
            <person name="Glaser P."/>
            <person name="Goffeau A."/>
            <person name="Golightly E.J."/>
            <person name="Grandi G."/>
            <person name="Guiseppi G."/>
            <person name="Guy B.J."/>
            <person name="Haga K."/>
            <person name="Haiech J."/>
            <person name="Harwood C.R."/>
            <person name="Henaut A."/>
            <person name="Hilbert H."/>
            <person name="Holsappel S."/>
            <person name="Hosono S."/>
            <person name="Hullo M.-F."/>
            <person name="Itaya M."/>
            <person name="Jones L.-M."/>
            <person name="Joris B."/>
            <person name="Karamata D."/>
            <person name="Kasahara Y."/>
            <person name="Klaerr-Blanchard M."/>
            <person name="Klein C."/>
            <person name="Kobayashi Y."/>
            <person name="Koetter P."/>
            <person name="Koningstein G."/>
            <person name="Krogh S."/>
            <person name="Kumano M."/>
            <person name="Kurita K."/>
            <person name="Lapidus A."/>
            <person name="Lardinois S."/>
            <person name="Lauber J."/>
            <person name="Lazarevic V."/>
            <person name="Lee S.-M."/>
            <person name="Levine A."/>
            <person name="Liu H."/>
            <person name="Masuda S."/>
            <person name="Mauel C."/>
            <person name="Medigue C."/>
            <person name="Medina N."/>
            <person name="Mellado R.P."/>
            <person name="Mizuno M."/>
            <person name="Moestl D."/>
            <person name="Nakai S."/>
            <person name="Noback M."/>
            <person name="Noone D."/>
            <person name="O'Reilly M."/>
            <person name="Ogawa K."/>
            <person name="Ogiwara A."/>
            <person name="Oudega B."/>
            <person name="Park S.-H."/>
            <person name="Parro V."/>
            <person name="Pohl T.M."/>
            <person name="Portetelle D."/>
            <person name="Porwollik S."/>
            <person name="Prescott A.M."/>
            <person name="Presecan E."/>
            <person name="Pujic P."/>
            <person name="Purnelle B."/>
            <person name="Rapoport G."/>
            <person name="Rey M."/>
            <person name="Reynolds S."/>
            <person name="Rieger M."/>
            <person name="Rivolta C."/>
            <person name="Rocha E."/>
            <person name="Roche B."/>
            <person name="Rose M."/>
            <person name="Sadaie Y."/>
            <person name="Sato T."/>
            <person name="Scanlan E."/>
            <person name="Schleich S."/>
            <person name="Schroeter R."/>
            <person name="Scoffone F."/>
            <person name="Sekiguchi J."/>
            <person name="Sekowska A."/>
            <person name="Seror S.J."/>
            <person name="Serror P."/>
            <person name="Shin B.-S."/>
            <person name="Soldo B."/>
            <person name="Sorokin A."/>
            <person name="Tacconi E."/>
            <person name="Takagi T."/>
            <person name="Takahashi H."/>
            <person name="Takemaru K."/>
            <person name="Takeuchi M."/>
            <person name="Tamakoshi A."/>
            <person name="Tanaka T."/>
            <person name="Terpstra P."/>
            <person name="Tognoni A."/>
            <person name="Tosato V."/>
            <person name="Uchiyama S."/>
            <person name="Vandenbol M."/>
            <person name="Vannier F."/>
            <person name="Vassarotti A."/>
            <person name="Viari A."/>
            <person name="Wambutt R."/>
            <person name="Wedler E."/>
            <person name="Wedler H."/>
            <person name="Weitzenegger T."/>
            <person name="Winters P."/>
            <person name="Wipat A."/>
            <person name="Yamamoto H."/>
            <person name="Yamane K."/>
            <person name="Yasumoto K."/>
            <person name="Yata K."/>
            <person name="Yoshida K."/>
            <person name="Yoshikawa H.-F."/>
            <person name="Zumstein E."/>
            <person name="Yoshikawa H."/>
            <person name="Danchin A."/>
        </authorList>
    </citation>
    <scope>NUCLEOTIDE SEQUENCE [LARGE SCALE GENOMIC DNA]</scope>
    <source>
        <strain>168</strain>
    </source>
</reference>
<reference key="4">
    <citation type="journal article" date="1989" name="Mol. Gen. Genet.">
        <title>Chromosomal location, cloning and nucleotide sequence of the Bacillus subtilis cdd gene encoding cytidine/deoxycytidine deaminase.</title>
        <authorList>
            <person name="Song B.-H."/>
            <person name="Neuhard J."/>
        </authorList>
    </citation>
    <scope>NUCLEOTIDE SEQUENCE [GENOMIC DNA] OF 1-106</scope>
    <source>
        <strain>168</strain>
    </source>
</reference>
<reference key="5">
    <citation type="journal article" date="2002" name="Microbiology">
        <title>Six GTP-binding proteins of the Era/Obg family are essential for cell growth in Bacillus subtilis.</title>
        <authorList>
            <person name="Morimoto T."/>
            <person name="Loh P.C."/>
            <person name="Hirai T."/>
            <person name="Asai K."/>
            <person name="Kobayashi K."/>
            <person name="Moriya S."/>
            <person name="Ogasawara N."/>
        </authorList>
    </citation>
    <scope>GTP- AND GDP-BINDING</scope>
    <scope>PROTEIN LEVELS</scope>
    <scope>DISRUPTION PHENOTYPE</scope>
    <source>
        <strain>CRK6000</strain>
    </source>
</reference>
<protein>
    <recommendedName>
        <fullName>GTPase Era</fullName>
    </recommendedName>
    <alternativeName>
        <fullName>Bex protein</fullName>
    </alternativeName>
</protein>
<dbReference type="EMBL" id="U18532">
    <property type="protein sequence ID" value="AAB59994.1"/>
    <property type="molecule type" value="Genomic_DNA"/>
</dbReference>
<dbReference type="EMBL" id="D84432">
    <property type="protein sequence ID" value="BAA12482.1"/>
    <property type="molecule type" value="Genomic_DNA"/>
</dbReference>
<dbReference type="EMBL" id="AL009126">
    <property type="protein sequence ID" value="CAB14458.1"/>
    <property type="molecule type" value="Genomic_DNA"/>
</dbReference>
<dbReference type="EMBL" id="X17430">
    <property type="status" value="NOT_ANNOTATED_CDS"/>
    <property type="molecule type" value="Genomic_DNA"/>
</dbReference>
<dbReference type="PIR" id="B69593">
    <property type="entry name" value="B69593"/>
</dbReference>
<dbReference type="RefSeq" id="NP_390407.1">
    <property type="nucleotide sequence ID" value="NC_000964.3"/>
</dbReference>
<dbReference type="RefSeq" id="WP_003230051.1">
    <property type="nucleotide sequence ID" value="NZ_OZ025638.1"/>
</dbReference>
<dbReference type="SMR" id="P42182"/>
<dbReference type="FunCoup" id="P42182">
    <property type="interactions" value="656"/>
</dbReference>
<dbReference type="STRING" id="224308.BSU25290"/>
<dbReference type="PaxDb" id="224308-BSU25290"/>
<dbReference type="EnsemblBacteria" id="CAB14458">
    <property type="protein sequence ID" value="CAB14458"/>
    <property type="gene ID" value="BSU_25290"/>
</dbReference>
<dbReference type="GeneID" id="937871"/>
<dbReference type="KEGG" id="bsu:BSU25290"/>
<dbReference type="PATRIC" id="fig|224308.179.peg.2749"/>
<dbReference type="eggNOG" id="COG1159">
    <property type="taxonomic scope" value="Bacteria"/>
</dbReference>
<dbReference type="InParanoid" id="P42182"/>
<dbReference type="OrthoDB" id="9805918at2"/>
<dbReference type="PhylomeDB" id="P42182"/>
<dbReference type="BioCyc" id="BSUB:BSU25290-MONOMER"/>
<dbReference type="Proteomes" id="UP000001570">
    <property type="component" value="Chromosome"/>
</dbReference>
<dbReference type="GO" id="GO:0005829">
    <property type="term" value="C:cytosol"/>
    <property type="evidence" value="ECO:0000318"/>
    <property type="project" value="GO_Central"/>
</dbReference>
<dbReference type="GO" id="GO:0005886">
    <property type="term" value="C:plasma membrane"/>
    <property type="evidence" value="ECO:0007669"/>
    <property type="project" value="UniProtKB-SubCell"/>
</dbReference>
<dbReference type="GO" id="GO:0005525">
    <property type="term" value="F:GTP binding"/>
    <property type="evidence" value="ECO:0007669"/>
    <property type="project" value="UniProtKB-UniRule"/>
</dbReference>
<dbReference type="GO" id="GO:0003924">
    <property type="term" value="F:GTPase activity"/>
    <property type="evidence" value="ECO:0007669"/>
    <property type="project" value="UniProtKB-UniRule"/>
</dbReference>
<dbReference type="GO" id="GO:0043024">
    <property type="term" value="F:ribosomal small subunit binding"/>
    <property type="evidence" value="ECO:0000318"/>
    <property type="project" value="GO_Central"/>
</dbReference>
<dbReference type="GO" id="GO:0019843">
    <property type="term" value="F:rRNA binding"/>
    <property type="evidence" value="ECO:0000318"/>
    <property type="project" value="GO_Central"/>
</dbReference>
<dbReference type="GO" id="GO:0070181">
    <property type="term" value="F:small ribosomal subunit rRNA binding"/>
    <property type="evidence" value="ECO:0007669"/>
    <property type="project" value="UniProtKB-UniRule"/>
</dbReference>
<dbReference type="GO" id="GO:0032297">
    <property type="term" value="P:negative regulation of DNA-templated DNA replication initiation"/>
    <property type="evidence" value="ECO:0000314"/>
    <property type="project" value="CACAO"/>
</dbReference>
<dbReference type="GO" id="GO:0051781">
    <property type="term" value="P:positive regulation of cell division"/>
    <property type="evidence" value="ECO:0000315"/>
    <property type="project" value="CACAO"/>
</dbReference>
<dbReference type="GO" id="GO:0000028">
    <property type="term" value="P:ribosomal small subunit assembly"/>
    <property type="evidence" value="ECO:0000318"/>
    <property type="project" value="GO_Central"/>
</dbReference>
<dbReference type="CDD" id="cd04163">
    <property type="entry name" value="Era"/>
    <property type="match status" value="1"/>
</dbReference>
<dbReference type="CDD" id="cd22534">
    <property type="entry name" value="KH-II_Era"/>
    <property type="match status" value="1"/>
</dbReference>
<dbReference type="FunFam" id="3.30.300.20:FF:000003">
    <property type="entry name" value="GTPase Era"/>
    <property type="match status" value="1"/>
</dbReference>
<dbReference type="FunFam" id="3.40.50.300:FF:000094">
    <property type="entry name" value="GTPase Era"/>
    <property type="match status" value="1"/>
</dbReference>
<dbReference type="Gene3D" id="3.30.300.20">
    <property type="match status" value="1"/>
</dbReference>
<dbReference type="Gene3D" id="3.40.50.300">
    <property type="entry name" value="P-loop containing nucleotide triphosphate hydrolases"/>
    <property type="match status" value="1"/>
</dbReference>
<dbReference type="HAMAP" id="MF_00367">
    <property type="entry name" value="GTPase_Era"/>
    <property type="match status" value="1"/>
</dbReference>
<dbReference type="InterPro" id="IPR030388">
    <property type="entry name" value="G_ERA_dom"/>
</dbReference>
<dbReference type="InterPro" id="IPR006073">
    <property type="entry name" value="GTP-bd"/>
</dbReference>
<dbReference type="InterPro" id="IPR005662">
    <property type="entry name" value="GTPase_Era-like"/>
</dbReference>
<dbReference type="InterPro" id="IPR015946">
    <property type="entry name" value="KH_dom-like_a/b"/>
</dbReference>
<dbReference type="InterPro" id="IPR004044">
    <property type="entry name" value="KH_dom_type_2"/>
</dbReference>
<dbReference type="InterPro" id="IPR009019">
    <property type="entry name" value="KH_sf_prok-type"/>
</dbReference>
<dbReference type="InterPro" id="IPR027417">
    <property type="entry name" value="P-loop_NTPase"/>
</dbReference>
<dbReference type="InterPro" id="IPR005225">
    <property type="entry name" value="Small_GTP-bd"/>
</dbReference>
<dbReference type="NCBIfam" id="TIGR00436">
    <property type="entry name" value="era"/>
    <property type="match status" value="1"/>
</dbReference>
<dbReference type="NCBIfam" id="NF000908">
    <property type="entry name" value="PRK00089.1"/>
    <property type="match status" value="1"/>
</dbReference>
<dbReference type="NCBIfam" id="TIGR00231">
    <property type="entry name" value="small_GTP"/>
    <property type="match status" value="1"/>
</dbReference>
<dbReference type="PANTHER" id="PTHR42698">
    <property type="entry name" value="GTPASE ERA"/>
    <property type="match status" value="1"/>
</dbReference>
<dbReference type="PANTHER" id="PTHR42698:SF1">
    <property type="entry name" value="GTPASE ERA, MITOCHONDRIAL"/>
    <property type="match status" value="1"/>
</dbReference>
<dbReference type="Pfam" id="PF07650">
    <property type="entry name" value="KH_2"/>
    <property type="match status" value="1"/>
</dbReference>
<dbReference type="Pfam" id="PF01926">
    <property type="entry name" value="MMR_HSR1"/>
    <property type="match status" value="1"/>
</dbReference>
<dbReference type="PRINTS" id="PR00326">
    <property type="entry name" value="GTP1OBG"/>
</dbReference>
<dbReference type="SUPFAM" id="SSF52540">
    <property type="entry name" value="P-loop containing nucleoside triphosphate hydrolases"/>
    <property type="match status" value="1"/>
</dbReference>
<dbReference type="SUPFAM" id="SSF54814">
    <property type="entry name" value="Prokaryotic type KH domain (KH-domain type II)"/>
    <property type="match status" value="1"/>
</dbReference>
<dbReference type="PROSITE" id="PS51713">
    <property type="entry name" value="G_ERA"/>
    <property type="match status" value="1"/>
</dbReference>
<dbReference type="PROSITE" id="PS50823">
    <property type="entry name" value="KH_TYPE_2"/>
    <property type="match status" value="1"/>
</dbReference>
<proteinExistence type="evidence at protein level"/>
<feature type="chain" id="PRO_0000179997" description="GTPase Era">
    <location>
        <begin position="1"/>
        <end position="301"/>
    </location>
</feature>
<feature type="domain" description="Era-type G" evidence="3">
    <location>
        <begin position="7"/>
        <end position="174"/>
    </location>
</feature>
<feature type="domain" description="KH type-2">
    <location>
        <begin position="205"/>
        <end position="282"/>
    </location>
</feature>
<feature type="region of interest" description="G1" evidence="3">
    <location>
        <begin position="15"/>
        <end position="22"/>
    </location>
</feature>
<feature type="region of interest" description="G2" evidence="3">
    <location>
        <begin position="41"/>
        <end position="45"/>
    </location>
</feature>
<feature type="region of interest" description="G3" evidence="3">
    <location>
        <begin position="62"/>
        <end position="65"/>
    </location>
</feature>
<feature type="region of interest" description="G4" evidence="3">
    <location>
        <begin position="124"/>
        <end position="127"/>
    </location>
</feature>
<feature type="region of interest" description="G5" evidence="3">
    <location>
        <begin position="153"/>
        <end position="155"/>
    </location>
</feature>
<feature type="binding site" evidence="2">
    <location>
        <begin position="15"/>
        <end position="22"/>
    </location>
    <ligand>
        <name>GTP</name>
        <dbReference type="ChEBI" id="CHEBI:37565"/>
    </ligand>
</feature>
<feature type="binding site" evidence="2">
    <location>
        <begin position="62"/>
        <end position="66"/>
    </location>
    <ligand>
        <name>GTP</name>
        <dbReference type="ChEBI" id="CHEBI:37565"/>
    </ligand>
</feature>
<feature type="binding site" evidence="2">
    <location>
        <begin position="124"/>
        <end position="127"/>
    </location>
    <ligand>
        <name>GTP</name>
        <dbReference type="ChEBI" id="CHEBI:37565"/>
    </ligand>
</feature>
<accession>P42182</accession>
<evidence type="ECO:0000250" key="1"/>
<evidence type="ECO:0000255" key="2"/>
<evidence type="ECO:0000255" key="3">
    <source>
        <dbReference type="PROSITE-ProRule" id="PRU01050"/>
    </source>
</evidence>
<evidence type="ECO:0000269" key="4">
    <source>
    </source>
</evidence>
<evidence type="ECO:0000269" key="5">
    <source>
    </source>
</evidence>
<evidence type="ECO:0000305" key="6"/>
<comment type="function">
    <text evidence="1">An essential GTPase that binds both GDP and GTP, with rapid nucleotide exchange. Plays a role in 16S rRNA processing and 30S ribosomal subunit biogenesis and possibly also in cell cycle regulation and energy metabolism (By similarity). Binds both GDP and GTP. Complements an E.coli era disruption mutant.</text>
</comment>
<comment type="subunit">
    <text evidence="1">Monomer.</text>
</comment>
<comment type="subcellular location">
    <subcellularLocation>
        <location>Cytoplasm</location>
    </subcellularLocation>
    <subcellularLocation>
        <location evidence="1">Cell membrane</location>
        <topology evidence="1">Peripheral membrane protein</topology>
    </subcellularLocation>
</comment>
<comment type="induction">
    <text evidence="4">Constitutively expressed, two-fold induced at the end of the exponential phase; this is under control of Spo0A, suggesting it may have a role in sporulation.</text>
</comment>
<comment type="disruption phenotype">
    <text evidence="4 5">Essential in some but not all strains; in 168 / BR151 the null mutation grows slowly and forms irregularly shaped colonies after several days. In liquid culture forms chains of elongated cells with diffuse nucleoids that occupy most of the cell. Sporulation in this disruption strain is severely impaired. Essential in strains CRK6000 and IS75, where it cannot be disrupted. In CRK600 in depletion experiments cells become 1.5 to 2-fold longer and nucleoid distribution is dispersed. The number of replication origins increases, suggesting an increase in chromosome replication.</text>
</comment>
<comment type="miscellaneous">
    <text>Estimated to be present at 3000 copies per cell.</text>
</comment>
<comment type="similarity">
    <text evidence="3 6">Belongs to the TRAFAC class TrmE-Era-EngA-EngB-Septin-like GTPase superfamily. Era GTPase family.</text>
</comment>
<name>ERA_BACSU</name>
<organism>
    <name type="scientific">Bacillus subtilis (strain 168)</name>
    <dbReference type="NCBI Taxonomy" id="224308"/>
    <lineage>
        <taxon>Bacteria</taxon>
        <taxon>Bacillati</taxon>
        <taxon>Bacillota</taxon>
        <taxon>Bacilli</taxon>
        <taxon>Bacillales</taxon>
        <taxon>Bacillaceae</taxon>
        <taxon>Bacillus</taxon>
    </lineage>
</organism>
<sequence length="301" mass="34074">MTNESFKSGFVSIIGRPNVGKSTFLNRVIGQKIAIMSDKPQTTRNKVQGVLTTGTSQTIFIDTPGIHKPKHKLGDFMMKVAQNTLKEVDLILFMINAEEGYGKGDEFIIEKLQTMSTPVFLIVNKIDKIHPDQLLLLIDEYRKRYPFKEIVPISALEGNNIETLLAQIEAYLPEGPQFYPSDQVTDHPERFIISELIREKVLHLTREEIPHSIAVAIESIKGQDNGSVHVAATIVVERDSQKGIVIGKKGSLLKEVGKRARADIEALLGSRVYLELWVKVQKDWRNKMSQLRDFGFKEDEY</sequence>
<gene>
    <name type="primary">era</name>
    <name type="synonym">bex</name>
    <name type="synonym">yqfH</name>
    <name type="ordered locus">BSU25290</name>
</gene>